<sequence>MGKPDIYNSSANVEKSPYYKAMQHRAPNVLTAVDKKAHGMRRRILSQGLSDSSTRAFGNTIKKHIERLCQKIEGHSDPNTQWSESYDMARWFSYLTFDIMADVVFGQPYNLLGNSEYRYVVDSIEGSNIRTGVLIQAPEAYTWRLDKRLFPASIRHRNTFVKFISSLVQERLTTKPLERDDIISHLLTAKDSETGQGFTKNEVAAESSTLIVAGTDTSSTALAATLFYLTQYPNMYRRAVAEVRSSFAKSQDVKLGRALNECVFTRACIEESMRLSPPAASALWRRVQVGGQTVDGHAIQAGCNIGVCIYAIHHNELYYPDPFVFNPDRWLQNDKQAQSAFSPFSVGPRSCIGKGFAMAELMLAVATILVKFDIRRAPGDQGCIGQGHLEGEDGRRMVDEYQLHDHVTAFKQGPVLQFRRRDTVVQSEAE</sequence>
<dbReference type="EC" id="1.-.-.-" evidence="5"/>
<dbReference type="EMBL" id="HG970332">
    <property type="protein sequence ID" value="CEF71864.1"/>
    <property type="molecule type" value="Genomic_DNA"/>
</dbReference>
<dbReference type="SMR" id="A0A098CZ12"/>
<dbReference type="STRING" id="229533.A0A098CZ12"/>
<dbReference type="VEuPathDB" id="FungiDB:FGRAMPH1_01G00129"/>
<dbReference type="eggNOG" id="KOG0157">
    <property type="taxonomic scope" value="Eukaryota"/>
</dbReference>
<dbReference type="InParanoid" id="A0A098CZ12"/>
<dbReference type="Proteomes" id="UP000070720">
    <property type="component" value="Chromosome 1"/>
</dbReference>
<dbReference type="GO" id="GO:0020037">
    <property type="term" value="F:heme binding"/>
    <property type="evidence" value="ECO:0007669"/>
    <property type="project" value="InterPro"/>
</dbReference>
<dbReference type="GO" id="GO:0005506">
    <property type="term" value="F:iron ion binding"/>
    <property type="evidence" value="ECO:0007669"/>
    <property type="project" value="InterPro"/>
</dbReference>
<dbReference type="GO" id="GO:0004497">
    <property type="term" value="F:monooxygenase activity"/>
    <property type="evidence" value="ECO:0007669"/>
    <property type="project" value="UniProtKB-KW"/>
</dbReference>
<dbReference type="GO" id="GO:0016705">
    <property type="term" value="F:oxidoreductase activity, acting on paired donors, with incorporation or reduction of molecular oxygen"/>
    <property type="evidence" value="ECO:0007669"/>
    <property type="project" value="InterPro"/>
</dbReference>
<dbReference type="CDD" id="cd11061">
    <property type="entry name" value="CYP67-like"/>
    <property type="match status" value="1"/>
</dbReference>
<dbReference type="Gene3D" id="1.10.630.10">
    <property type="entry name" value="Cytochrome P450"/>
    <property type="match status" value="1"/>
</dbReference>
<dbReference type="InterPro" id="IPR001128">
    <property type="entry name" value="Cyt_P450"/>
</dbReference>
<dbReference type="InterPro" id="IPR017972">
    <property type="entry name" value="Cyt_P450_CS"/>
</dbReference>
<dbReference type="InterPro" id="IPR002401">
    <property type="entry name" value="Cyt_P450_E_grp-I"/>
</dbReference>
<dbReference type="InterPro" id="IPR036396">
    <property type="entry name" value="Cyt_P450_sf"/>
</dbReference>
<dbReference type="InterPro" id="IPR050121">
    <property type="entry name" value="Cytochrome_P450_monoxygenase"/>
</dbReference>
<dbReference type="PANTHER" id="PTHR24305">
    <property type="entry name" value="CYTOCHROME P450"/>
    <property type="match status" value="1"/>
</dbReference>
<dbReference type="PANTHER" id="PTHR24305:SF237">
    <property type="entry name" value="CYTOCHROME P450 MONOOXYGENASE ATNE-RELATED"/>
    <property type="match status" value="1"/>
</dbReference>
<dbReference type="Pfam" id="PF00067">
    <property type="entry name" value="p450"/>
    <property type="match status" value="1"/>
</dbReference>
<dbReference type="PRINTS" id="PR00463">
    <property type="entry name" value="EP450I"/>
</dbReference>
<dbReference type="PRINTS" id="PR00385">
    <property type="entry name" value="P450"/>
</dbReference>
<dbReference type="SUPFAM" id="SSF48264">
    <property type="entry name" value="Cytochrome P450"/>
    <property type="match status" value="1"/>
</dbReference>
<dbReference type="PROSITE" id="PS00086">
    <property type="entry name" value="CYTOCHROME_P450"/>
    <property type="match status" value="1"/>
</dbReference>
<gene>
    <name type="ORF">FGRAMPH1_01T00129</name>
    <name type="ORF">FGSG_15680</name>
</gene>
<proteinExistence type="inferred from homology"/>
<feature type="chain" id="PRO_0000450563" description="Cytochrome P450 monooxygenase FGSG_15680">
    <location>
        <begin position="1"/>
        <end position="430"/>
    </location>
</feature>
<feature type="binding site" description="axial binding residue" evidence="1">
    <location>
        <position position="351"/>
    </location>
    <ligand>
        <name>heme</name>
        <dbReference type="ChEBI" id="CHEBI:30413"/>
    </ligand>
    <ligandPart>
        <name>Fe</name>
        <dbReference type="ChEBI" id="CHEBI:18248"/>
    </ligandPart>
</feature>
<evidence type="ECO:0000250" key="1">
    <source>
        <dbReference type="UniProtKB" id="P04798"/>
    </source>
</evidence>
<evidence type="ECO:0000269" key="2">
    <source>
    </source>
</evidence>
<evidence type="ECO:0000303" key="3">
    <source>
    </source>
</evidence>
<evidence type="ECO:0000305" key="4"/>
<evidence type="ECO:0000305" key="5">
    <source>
    </source>
</evidence>
<keyword id="KW-0349">Heme</keyword>
<keyword id="KW-0408">Iron</keyword>
<keyword id="KW-0479">Metal-binding</keyword>
<keyword id="KW-0503">Monooxygenase</keyword>
<keyword id="KW-0560">Oxidoreductase</keyword>
<keyword id="KW-1185">Reference proteome</keyword>
<reference key="1">
    <citation type="journal article" date="2007" name="Science">
        <title>The Fusarium graminearum genome reveals a link between localized polymorphism and pathogen specialization.</title>
        <authorList>
            <person name="Cuomo C.A."/>
            <person name="Gueldener U."/>
            <person name="Xu J.-R."/>
            <person name="Trail F."/>
            <person name="Turgeon B.G."/>
            <person name="Di Pietro A."/>
            <person name="Walton J.D."/>
            <person name="Ma L.-J."/>
            <person name="Baker S.E."/>
            <person name="Rep M."/>
            <person name="Adam G."/>
            <person name="Antoniw J."/>
            <person name="Baldwin T."/>
            <person name="Calvo S.E."/>
            <person name="Chang Y.-L."/>
            <person name="DeCaprio D."/>
            <person name="Gale L.R."/>
            <person name="Gnerre S."/>
            <person name="Goswami R.S."/>
            <person name="Hammond-Kosack K."/>
            <person name="Harris L.J."/>
            <person name="Hilburn K."/>
            <person name="Kennell J.C."/>
            <person name="Kroken S."/>
            <person name="Magnuson J.K."/>
            <person name="Mannhaupt G."/>
            <person name="Mauceli E.W."/>
            <person name="Mewes H.-W."/>
            <person name="Mitterbauer R."/>
            <person name="Muehlbauer G."/>
            <person name="Muensterkoetter M."/>
            <person name="Nelson D."/>
            <person name="O'Donnell K."/>
            <person name="Ouellet T."/>
            <person name="Qi W."/>
            <person name="Quesneville H."/>
            <person name="Roncero M.I.G."/>
            <person name="Seong K.-Y."/>
            <person name="Tetko I.V."/>
            <person name="Urban M."/>
            <person name="Waalwijk C."/>
            <person name="Ward T.J."/>
            <person name="Yao J."/>
            <person name="Birren B.W."/>
            <person name="Kistler H.C."/>
        </authorList>
    </citation>
    <scope>NUCLEOTIDE SEQUENCE [LARGE SCALE GENOMIC DNA]</scope>
    <source>
        <strain>ATCC MYA-4620 / CBS 123657 / FGSC 9075 / NRRL 31084 / PH-1</strain>
    </source>
</reference>
<reference key="2">
    <citation type="journal article" date="2010" name="Nature">
        <title>Comparative genomics reveals mobile pathogenicity chromosomes in Fusarium.</title>
        <authorList>
            <person name="Ma L.-J."/>
            <person name="van der Does H.C."/>
            <person name="Borkovich K.A."/>
            <person name="Coleman J.J."/>
            <person name="Daboussi M.-J."/>
            <person name="Di Pietro A."/>
            <person name="Dufresne M."/>
            <person name="Freitag M."/>
            <person name="Grabherr M."/>
            <person name="Henrissat B."/>
            <person name="Houterman P.M."/>
            <person name="Kang S."/>
            <person name="Shim W.-B."/>
            <person name="Woloshuk C."/>
            <person name="Xie X."/>
            <person name="Xu J.-R."/>
            <person name="Antoniw J."/>
            <person name="Baker S.E."/>
            <person name="Bluhm B.H."/>
            <person name="Breakspear A."/>
            <person name="Brown D.W."/>
            <person name="Butchko R.A.E."/>
            <person name="Chapman S."/>
            <person name="Coulson R."/>
            <person name="Coutinho P.M."/>
            <person name="Danchin E.G.J."/>
            <person name="Diener A."/>
            <person name="Gale L.R."/>
            <person name="Gardiner D.M."/>
            <person name="Goff S."/>
            <person name="Hammond-Kosack K.E."/>
            <person name="Hilburn K."/>
            <person name="Hua-Van A."/>
            <person name="Jonkers W."/>
            <person name="Kazan K."/>
            <person name="Kodira C.D."/>
            <person name="Koehrsen M."/>
            <person name="Kumar L."/>
            <person name="Lee Y.-H."/>
            <person name="Li L."/>
            <person name="Manners J.M."/>
            <person name="Miranda-Saavedra D."/>
            <person name="Mukherjee M."/>
            <person name="Park G."/>
            <person name="Park J."/>
            <person name="Park S.-Y."/>
            <person name="Proctor R.H."/>
            <person name="Regev A."/>
            <person name="Ruiz-Roldan M.C."/>
            <person name="Sain D."/>
            <person name="Sakthikumar S."/>
            <person name="Sykes S."/>
            <person name="Schwartz D.C."/>
            <person name="Turgeon B.G."/>
            <person name="Wapinski I."/>
            <person name="Yoder O."/>
            <person name="Young S."/>
            <person name="Zeng Q."/>
            <person name="Zhou S."/>
            <person name="Galagan J."/>
            <person name="Cuomo C.A."/>
            <person name="Kistler H.C."/>
            <person name="Rep M."/>
        </authorList>
    </citation>
    <scope>GENOME REANNOTATION</scope>
    <source>
        <strain>ATCC MYA-4620 / CBS 123657 / FGSC 9075 / NRRL 31084 / PH-1</strain>
    </source>
</reference>
<reference key="3">
    <citation type="journal article" date="2015" name="BMC Genomics">
        <title>The completed genome sequence of the pathogenic ascomycete fungus Fusarium graminearum.</title>
        <authorList>
            <person name="King R."/>
            <person name="Urban M."/>
            <person name="Hammond-Kosack M.C.U."/>
            <person name="Hassani-Pak K."/>
            <person name="Hammond-Kosack K.E."/>
        </authorList>
    </citation>
    <scope>NUCLEOTIDE SEQUENCE [LARGE SCALE GENOMIC DNA]</scope>
    <source>
        <strain>ATCC MYA-4620 / CBS 123657 / FGSC 9075 / NRRL 31084 / PH-1</strain>
    </source>
</reference>
<reference key="4">
    <citation type="journal article" date="2018" name="J. Am. Chem. Soc.">
        <title>Gramillin A and B: cyclic lipopeptides identified as the nonribosomal biosynthetic products of Fusarium graminearum.</title>
        <authorList>
            <person name="Bahadoor A."/>
            <person name="Brauer E.K."/>
            <person name="Bosnich W."/>
            <person name="Schneiderman D."/>
            <person name="Johnston A."/>
            <person name="Aubin Y."/>
            <person name="Blackwell B."/>
            <person name="Melanson J.E."/>
            <person name="Harris L.J."/>
        </authorList>
    </citation>
    <scope>FUNCTION</scope>
    <scope>PATHWAY</scope>
</reference>
<organism>
    <name type="scientific">Gibberella zeae (strain ATCC MYA-4620 / CBS 123657 / FGSC 9075 / NRRL 31084 / PH-1)</name>
    <name type="common">Wheat head blight fungus</name>
    <name type="synonym">Fusarium graminearum</name>
    <dbReference type="NCBI Taxonomy" id="229533"/>
    <lineage>
        <taxon>Eukaryota</taxon>
        <taxon>Fungi</taxon>
        <taxon>Dikarya</taxon>
        <taxon>Ascomycota</taxon>
        <taxon>Pezizomycotina</taxon>
        <taxon>Sordariomycetes</taxon>
        <taxon>Hypocreomycetidae</taxon>
        <taxon>Hypocreales</taxon>
        <taxon>Nectriaceae</taxon>
        <taxon>Fusarium</taxon>
    </lineage>
</organism>
<protein>
    <recommendedName>
        <fullName evidence="3">Cytochrome P450 monooxygenase FGSG_15680</fullName>
        <ecNumber evidence="5">1.-.-.-</ecNumber>
    </recommendedName>
    <alternativeName>
        <fullName evidence="3">Gramillins biosynthetic cluster protein FGSG_15680</fullName>
    </alternativeName>
</protein>
<name>GRA8_GIBZE</name>
<accession>A0A098CZ12</accession>
<accession>A0A0E0RKT9</accession>
<comment type="function">
    <text evidence="2 5">Cytochrome P450 monooxygenase; part of the gene cluster that mediates the biosynthesis of gramillins A and B, bicyclic lipopeptides that induce cell death in maize leaves but not in wheat leaves (PubMed:30395461). The nonribosomal peptide synthetase GRA1 incorporates respectively a glutamic adic (Glu), a leucine (Leu), a serine (Ser), a hydroxyglutamine (HOGln), a 2-amino decanoic acid, and 2 cysteins (CysB and CysA) (Probable). The biosynthesis of 2-amino decanoic acid incorporated in gramillins could be initiated by a fatty acid synthase composed of the alpha and beta subunits FGSG_00036 and FGSG_11656 (Probable). The cytochrome P450 monooxygenase FGSG_15680 could hydroxylate the fatty acid chain (Probable). Subsequent oxidation to the ketone by the oxidoreductase FGSG_00048 and transamination by aminotransferase FGSG_00049 could form 2-amino-decanoic acid (Probable). On the other hand, FGSG_15680 could also be responsible for the HO-modified glutamine at the gamma-position (Probable). Whether hydroxylation occurs on the fully assembled product or on the Gln residue prior to assembly into the gramillins requires further proof (Probable). The thioredoxin FGSG_00043 could also be required for the disulfide-bond formation between CysA and CysB (Probable). The specific involvement of the remaining proteins from the cluster is more difficult to discern, but could have broader regulatory (FGSG_00040 and FGSG_11657) or enzymatic functions (FGSG_00044 and FGSG_00045) (Probable). The final C-domain of GRA1 does not possess the expected sequence of a termination CT domain, often implicated in macrocyclization and release of a cyclopeptidein fungal NRPs; and the thioesterase FGSG_00047 may act in concert with the terminal C-domain of GRA1 to catalyze the formation of the macrocyclic anhydride and release of the products (Probable).</text>
</comment>
<comment type="cofactor">
    <cofactor evidence="1">
        <name>heme</name>
        <dbReference type="ChEBI" id="CHEBI:30413"/>
    </cofactor>
</comment>
<comment type="pathway">
    <text evidence="5">Mycotoxin biosynthesis.</text>
</comment>
<comment type="similarity">
    <text evidence="4">Belongs to the cytochrome P450 family.</text>
</comment>